<dbReference type="EC" id="4.1.99.12" evidence="1"/>
<dbReference type="EMBL" id="CP000447">
    <property type="protein sequence ID" value="ABI73693.1"/>
    <property type="molecule type" value="Genomic_DNA"/>
</dbReference>
<dbReference type="RefSeq" id="WP_011639277.1">
    <property type="nucleotide sequence ID" value="NC_008345.1"/>
</dbReference>
<dbReference type="SMR" id="Q07WC1"/>
<dbReference type="STRING" id="318167.Sfri_3868"/>
<dbReference type="GeneID" id="90570985"/>
<dbReference type="KEGG" id="sfr:Sfri_3868"/>
<dbReference type="eggNOG" id="COG0108">
    <property type="taxonomic scope" value="Bacteria"/>
</dbReference>
<dbReference type="HOGENOM" id="CLU_020273_3_0_6"/>
<dbReference type="OrthoDB" id="9793111at2"/>
<dbReference type="UniPathway" id="UPA00275">
    <property type="reaction ID" value="UER00399"/>
</dbReference>
<dbReference type="Proteomes" id="UP000000684">
    <property type="component" value="Chromosome"/>
</dbReference>
<dbReference type="GO" id="GO:0005829">
    <property type="term" value="C:cytosol"/>
    <property type="evidence" value="ECO:0007669"/>
    <property type="project" value="TreeGrafter"/>
</dbReference>
<dbReference type="GO" id="GO:0008686">
    <property type="term" value="F:3,4-dihydroxy-2-butanone-4-phosphate synthase activity"/>
    <property type="evidence" value="ECO:0007669"/>
    <property type="project" value="UniProtKB-UniRule"/>
</dbReference>
<dbReference type="GO" id="GO:0000287">
    <property type="term" value="F:magnesium ion binding"/>
    <property type="evidence" value="ECO:0007669"/>
    <property type="project" value="UniProtKB-UniRule"/>
</dbReference>
<dbReference type="GO" id="GO:0030145">
    <property type="term" value="F:manganese ion binding"/>
    <property type="evidence" value="ECO:0007669"/>
    <property type="project" value="UniProtKB-UniRule"/>
</dbReference>
<dbReference type="GO" id="GO:0009231">
    <property type="term" value="P:riboflavin biosynthetic process"/>
    <property type="evidence" value="ECO:0007669"/>
    <property type="project" value="UniProtKB-UniRule"/>
</dbReference>
<dbReference type="FunFam" id="3.90.870.10:FF:000002">
    <property type="entry name" value="3,4-dihydroxy-2-butanone 4-phosphate synthase"/>
    <property type="match status" value="1"/>
</dbReference>
<dbReference type="Gene3D" id="3.90.870.10">
    <property type="entry name" value="DHBP synthase"/>
    <property type="match status" value="1"/>
</dbReference>
<dbReference type="HAMAP" id="MF_00180">
    <property type="entry name" value="RibB"/>
    <property type="match status" value="1"/>
</dbReference>
<dbReference type="InterPro" id="IPR017945">
    <property type="entry name" value="DHBP_synth_RibB-like_a/b_dom"/>
</dbReference>
<dbReference type="InterPro" id="IPR000422">
    <property type="entry name" value="DHBP_synthase_RibB"/>
</dbReference>
<dbReference type="NCBIfam" id="TIGR00506">
    <property type="entry name" value="ribB"/>
    <property type="match status" value="1"/>
</dbReference>
<dbReference type="PANTHER" id="PTHR21327:SF38">
    <property type="entry name" value="3,4-DIHYDROXY-2-BUTANONE 4-PHOSPHATE SYNTHASE"/>
    <property type="match status" value="1"/>
</dbReference>
<dbReference type="PANTHER" id="PTHR21327">
    <property type="entry name" value="GTP CYCLOHYDROLASE II-RELATED"/>
    <property type="match status" value="1"/>
</dbReference>
<dbReference type="Pfam" id="PF00926">
    <property type="entry name" value="DHBP_synthase"/>
    <property type="match status" value="1"/>
</dbReference>
<dbReference type="SUPFAM" id="SSF55821">
    <property type="entry name" value="YrdC/RibB"/>
    <property type="match status" value="1"/>
</dbReference>
<keyword id="KW-0456">Lyase</keyword>
<keyword id="KW-0460">Magnesium</keyword>
<keyword id="KW-0464">Manganese</keyword>
<keyword id="KW-0479">Metal-binding</keyword>
<keyword id="KW-1185">Reference proteome</keyword>
<keyword id="KW-0686">Riboflavin biosynthesis</keyword>
<reference key="1">
    <citation type="submission" date="2006-08" db="EMBL/GenBank/DDBJ databases">
        <title>Complete sequence of Shewanella frigidimarina NCIMB 400.</title>
        <authorList>
            <consortium name="US DOE Joint Genome Institute"/>
            <person name="Copeland A."/>
            <person name="Lucas S."/>
            <person name="Lapidus A."/>
            <person name="Barry K."/>
            <person name="Detter J.C."/>
            <person name="Glavina del Rio T."/>
            <person name="Hammon N."/>
            <person name="Israni S."/>
            <person name="Dalin E."/>
            <person name="Tice H."/>
            <person name="Pitluck S."/>
            <person name="Fredrickson J.K."/>
            <person name="Kolker E."/>
            <person name="McCuel L.A."/>
            <person name="DiChristina T."/>
            <person name="Nealson K.H."/>
            <person name="Newman D."/>
            <person name="Tiedje J.M."/>
            <person name="Zhou J."/>
            <person name="Romine M.F."/>
            <person name="Culley D.E."/>
            <person name="Serres M."/>
            <person name="Chertkov O."/>
            <person name="Brettin T."/>
            <person name="Bruce D."/>
            <person name="Han C."/>
            <person name="Tapia R."/>
            <person name="Gilna P."/>
            <person name="Schmutz J."/>
            <person name="Larimer F."/>
            <person name="Land M."/>
            <person name="Hauser L."/>
            <person name="Kyrpides N."/>
            <person name="Mikhailova N."/>
            <person name="Richardson P."/>
        </authorList>
    </citation>
    <scope>NUCLEOTIDE SEQUENCE [LARGE SCALE GENOMIC DNA]</scope>
    <source>
        <strain>NCIMB 400</strain>
    </source>
</reference>
<accession>Q07WC1</accession>
<comment type="function">
    <text evidence="1">Catalyzes the conversion of D-ribulose 5-phosphate to formate and 3,4-dihydroxy-2-butanone 4-phosphate.</text>
</comment>
<comment type="catalytic activity">
    <reaction evidence="1">
        <text>D-ribulose 5-phosphate = (2S)-2-hydroxy-3-oxobutyl phosphate + formate + H(+)</text>
        <dbReference type="Rhea" id="RHEA:18457"/>
        <dbReference type="ChEBI" id="CHEBI:15378"/>
        <dbReference type="ChEBI" id="CHEBI:15740"/>
        <dbReference type="ChEBI" id="CHEBI:58121"/>
        <dbReference type="ChEBI" id="CHEBI:58830"/>
        <dbReference type="EC" id="4.1.99.12"/>
    </reaction>
</comment>
<comment type="cofactor">
    <cofactor evidence="1">
        <name>Mg(2+)</name>
        <dbReference type="ChEBI" id="CHEBI:18420"/>
    </cofactor>
    <cofactor evidence="1">
        <name>Mn(2+)</name>
        <dbReference type="ChEBI" id="CHEBI:29035"/>
    </cofactor>
    <text evidence="1">Binds 2 divalent metal cations per subunit. Magnesium or manganese.</text>
</comment>
<comment type="pathway">
    <text evidence="1">Cofactor biosynthesis; riboflavin biosynthesis; 2-hydroxy-3-oxobutyl phosphate from D-ribulose 5-phosphate: step 1/1.</text>
</comment>
<comment type="subunit">
    <text evidence="1">Homodimer.</text>
</comment>
<comment type="similarity">
    <text evidence="1">Belongs to the DHBP synthase family.</text>
</comment>
<proteinExistence type="inferred from homology"/>
<name>RIBB_SHEFN</name>
<sequence length="218" mass="23685">MNQLSLLAEFGEPITRVENALAALREGRGVLLLDDEDRENEGDIIYSVEHLTTAQMALMIRECSGIVCLCLTDEHANKLQLPPMVINNNSANQTAFTISIEAKHGVTTGVSAQDRVTTIKTAANRDAKASDLAHPGHVFPLRARAGGVMSRRGHTEGTVDLMQMAGLMPAGVLCELANEDGSMAKTPEIIAFGLKHNMPVLTIEDMVMYRNQYDLKLA</sequence>
<gene>
    <name evidence="1" type="primary">ribB</name>
    <name type="ordered locus">Sfri_3868</name>
</gene>
<protein>
    <recommendedName>
        <fullName evidence="1">3,4-dihydroxy-2-butanone 4-phosphate synthase</fullName>
        <shortName evidence="1">DHBP synthase</shortName>
        <ecNumber evidence="1">4.1.99.12</ecNumber>
    </recommendedName>
</protein>
<feature type="chain" id="PRO_1000040627" description="3,4-dihydroxy-2-butanone 4-phosphate synthase">
    <location>
        <begin position="1"/>
        <end position="218"/>
    </location>
</feature>
<feature type="binding site" evidence="1">
    <location>
        <begin position="38"/>
        <end position="39"/>
    </location>
    <ligand>
        <name>D-ribulose 5-phosphate</name>
        <dbReference type="ChEBI" id="CHEBI:58121"/>
    </ligand>
</feature>
<feature type="binding site" evidence="1">
    <location>
        <position position="39"/>
    </location>
    <ligand>
        <name>Mg(2+)</name>
        <dbReference type="ChEBI" id="CHEBI:18420"/>
        <label>1</label>
    </ligand>
</feature>
<feature type="binding site" evidence="1">
    <location>
        <position position="39"/>
    </location>
    <ligand>
        <name>Mg(2+)</name>
        <dbReference type="ChEBI" id="CHEBI:18420"/>
        <label>2</label>
    </ligand>
</feature>
<feature type="binding site" evidence="1">
    <location>
        <position position="43"/>
    </location>
    <ligand>
        <name>D-ribulose 5-phosphate</name>
        <dbReference type="ChEBI" id="CHEBI:58121"/>
    </ligand>
</feature>
<feature type="binding site" evidence="1">
    <location>
        <begin position="151"/>
        <end position="155"/>
    </location>
    <ligand>
        <name>D-ribulose 5-phosphate</name>
        <dbReference type="ChEBI" id="CHEBI:58121"/>
    </ligand>
</feature>
<feature type="binding site" evidence="1">
    <location>
        <position position="154"/>
    </location>
    <ligand>
        <name>Mg(2+)</name>
        <dbReference type="ChEBI" id="CHEBI:18420"/>
        <label>2</label>
    </ligand>
</feature>
<feature type="binding site" evidence="1">
    <location>
        <position position="175"/>
    </location>
    <ligand>
        <name>D-ribulose 5-phosphate</name>
        <dbReference type="ChEBI" id="CHEBI:58121"/>
    </ligand>
</feature>
<feature type="site" description="Essential for catalytic activity" evidence="1">
    <location>
        <position position="137"/>
    </location>
</feature>
<feature type="site" description="Essential for catalytic activity" evidence="1">
    <location>
        <position position="175"/>
    </location>
</feature>
<organism>
    <name type="scientific">Shewanella frigidimarina (strain NCIMB 400)</name>
    <dbReference type="NCBI Taxonomy" id="318167"/>
    <lineage>
        <taxon>Bacteria</taxon>
        <taxon>Pseudomonadati</taxon>
        <taxon>Pseudomonadota</taxon>
        <taxon>Gammaproteobacteria</taxon>
        <taxon>Alteromonadales</taxon>
        <taxon>Shewanellaceae</taxon>
        <taxon>Shewanella</taxon>
    </lineage>
</organism>
<evidence type="ECO:0000255" key="1">
    <source>
        <dbReference type="HAMAP-Rule" id="MF_00180"/>
    </source>
</evidence>